<sequence>MKGKKDGLNKQVHIYSIDTSAFYNDQENKLHNKILKSYRYRDHLRKLEHVDKKHKKYITQRIISLKEKLYNAFNDHNQIRTLRTDSLKDNNVISLFDSVLTRTLGIKENSLSEEIMVVQTYHFQILRDIIDKGFIHNNEKYVYFTSSAGQIRTKKSCFIKQSTLDKYQNALTCGLSVEHINAQGGSSINKWNSYMALSNSASSSWEIDIDKAIVVNDLETNVSSLVDYIDRDTYEITRKIMDIPIEHTDGCGMMLPSLSQKSFMVRLPWVKGLLVPFDFRKFAEKHSSFIVKDVYGKEWDIIKDDIQIIFTKSQFKMWKYYDSWDDYRYKFKKYGCLGAKLNEEDPSVEGKLTYQMLQTLTDITDEELKQISSKTVSEITQLGTDKETMMKVLGATEKNKHKTSLQEALLIYPELLNDDHTKEIIKNKKKSMIKDAKSGKLLVSDARYTYLCPDLYAFCERLFLGIESPKGLLSGSDVHCSLYDEGYIDILRSPHLFREHGVRWNKKNEEYEKWFITPGVYTSIHDPISKLLQFDNDGDKALIISDELIVNIAKRNMADIVPLYYEMSVAQKQEINSRNIYEALTLAYGINIGEYSNNITKIWNSDNINLDVIKWLCMENNFTIDFAKTLFMPTRPDHVDEKIKDYIKNKVPHFFINAKDKEEHSVESINESTVNKLDSIIPSDRINFAAVAGKFDYRFLLKNKEIKLNEAVINEYKRLDRNKKWLMNDEEAKPGQKLYVYKIIKQKLLEIHNDDGFITDVLVKHLYKKKSKYKSTLWECFGDIVLENIKHNLKTFKGCCICGKAFKPTSNKAKYCQSCGKKKERDKYKKYNKKRINHR</sequence>
<reference key="1">
    <citation type="journal article" date="1998" name="Proc. Natl. Acad. Sci. U.S.A.">
        <title>Introns and intein coding sequence in the ribonucleotide reductase genes of Bacillus subtilis temperate bacteriophage SPbeta.</title>
        <authorList>
            <person name="Lazarevic V."/>
            <person name="Soldo B."/>
            <person name="Duesterhoeft A."/>
            <person name="Hilbert H."/>
            <person name="Maueel C."/>
            <person name="Karamata D."/>
        </authorList>
    </citation>
    <scope>NUCLEOTIDE SEQUENCE [GENOMIC DNA]</scope>
</reference>
<reference key="2">
    <citation type="journal article" date="2017" name="Nat. Commun.">
        <title>Single-peptide DNA-dependent RNA polymerase homologous to multi-subunit RNA polymerase.</title>
        <authorList>
            <person name="Forrest D."/>
            <person name="James K."/>
            <person name="Yuzenkova Y."/>
            <person name="Zenkin N."/>
        </authorList>
    </citation>
    <scope>FUNCTION</scope>
</reference>
<evidence type="ECO:0000250" key="1">
    <source>
        <dbReference type="UniProtKB" id="P0A8T7"/>
    </source>
</evidence>
<evidence type="ECO:0000303" key="2">
    <source>
    </source>
</evidence>
<evidence type="ECO:0000305" key="3"/>
<evidence type="ECO:0000305" key="4">
    <source>
    </source>
</evidence>
<feature type="chain" id="PRO_0000447365" description="DNA-directed RNA polymerase YonO">
    <location>
        <begin position="1"/>
        <end position="839"/>
    </location>
</feature>
<feature type="binding site" evidence="1 4">
    <location>
        <position position="535"/>
    </location>
    <ligand>
        <name>Mg(2+)</name>
        <dbReference type="ChEBI" id="CHEBI:18420"/>
    </ligand>
</feature>
<feature type="binding site" evidence="1 4">
    <location>
        <position position="537"/>
    </location>
    <ligand>
        <name>Mg(2+)</name>
        <dbReference type="ChEBI" id="CHEBI:18420"/>
    </ligand>
</feature>
<feature type="binding site" evidence="1 4">
    <location>
        <position position="539"/>
    </location>
    <ligand>
        <name>Mg(2+)</name>
        <dbReference type="ChEBI" id="CHEBI:18420"/>
    </ligand>
</feature>
<gene>
    <name type="primary">yonO</name>
</gene>
<proteinExistence type="inferred from homology"/>
<protein>
    <recommendedName>
        <fullName>DNA-directed RNA polymerase YonO</fullName>
        <ecNumber evidence="4">2.7.7.6</ecNumber>
    </recommendedName>
    <alternativeName>
        <fullName evidence="2">DNA-dependent RNA polymerase YonO</fullName>
    </alternativeName>
</protein>
<keyword id="KW-0240">DNA-directed RNA polymerase</keyword>
<keyword id="KW-0460">Magnesium</keyword>
<keyword id="KW-0479">Metal-binding</keyword>
<keyword id="KW-0548">Nucleotidyltransferase</keyword>
<keyword id="KW-1185">Reference proteome</keyword>
<keyword id="KW-0804">Transcription</keyword>
<keyword id="KW-0808">Transferase</keyword>
<name>YONO_BPSPB</name>
<accession>O64076</accession>
<organismHost>
    <name type="scientific">Bacillus pumilus</name>
    <name type="common">Bacillus mesentericus</name>
    <dbReference type="NCBI Taxonomy" id="1408"/>
</organismHost>
<organismHost>
    <name type="scientific">Bacillus subtilis</name>
    <dbReference type="NCBI Taxonomy" id="1423"/>
</organismHost>
<organism>
    <name type="scientific">Bacillus phage SPbeta</name>
    <name type="common">Bacillus phage SPBc2</name>
    <name type="synonym">Bacteriophage SP-beta</name>
    <dbReference type="NCBI Taxonomy" id="2932878"/>
    <lineage>
        <taxon>Viruses</taxon>
        <taxon>Duplodnaviria</taxon>
        <taxon>Heunggongvirae</taxon>
        <taxon>Uroviricota</taxon>
        <taxon>Caudoviricetes</taxon>
        <taxon>Spbetavirus</taxon>
        <taxon>Spbetavirus SPbeta</taxon>
    </lineage>
</organism>
<dbReference type="EC" id="2.7.7.6" evidence="4"/>
<dbReference type="EMBL" id="AF020713">
    <property type="protein sequence ID" value="AAC13036.1"/>
    <property type="molecule type" value="Genomic_DNA"/>
</dbReference>
<dbReference type="PIR" id="T12827">
    <property type="entry name" value="T12827"/>
</dbReference>
<dbReference type="RefSeq" id="NP_046615.1">
    <property type="nucleotide sequence ID" value="NC_001884.1"/>
</dbReference>
<dbReference type="GeneID" id="1261348"/>
<dbReference type="KEGG" id="vg:1261348"/>
<dbReference type="BRENDA" id="2.7.7.6">
    <property type="organism ID" value="8808"/>
</dbReference>
<dbReference type="Proteomes" id="UP000009091">
    <property type="component" value="Genome"/>
</dbReference>
<dbReference type="GO" id="GO:0000428">
    <property type="term" value="C:DNA-directed RNA polymerase complex"/>
    <property type="evidence" value="ECO:0007669"/>
    <property type="project" value="UniProtKB-KW"/>
</dbReference>
<dbReference type="GO" id="GO:0003899">
    <property type="term" value="F:DNA-directed RNA polymerase activity"/>
    <property type="evidence" value="ECO:0007669"/>
    <property type="project" value="UniProtKB-EC"/>
</dbReference>
<dbReference type="GO" id="GO:0046872">
    <property type="term" value="F:metal ion binding"/>
    <property type="evidence" value="ECO:0007669"/>
    <property type="project" value="UniProtKB-KW"/>
</dbReference>
<comment type="function">
    <text evidence="4">A single subunit DNA-dependent RNA polymerase (RNAP) that catalyzes the transcription of DNA into RNA using the four ribonucleoside triphosphates (rNTPs) as substrates. The enzyme is more highly processive than the multisubunit RNAP from E.coli but is considerably more error-prone. It has no detectable proof-reading function but can perform pyrophosphorolysis. Probably transcribes the late genes of the SPbeta phage starting from yonK.</text>
</comment>
<comment type="catalytic activity">
    <reaction evidence="4">
        <text>RNA(n) + a ribonucleoside 5'-triphosphate = RNA(n+1) + diphosphate</text>
        <dbReference type="Rhea" id="RHEA:21248"/>
        <dbReference type="Rhea" id="RHEA-COMP:14527"/>
        <dbReference type="Rhea" id="RHEA-COMP:17342"/>
        <dbReference type="ChEBI" id="CHEBI:33019"/>
        <dbReference type="ChEBI" id="CHEBI:61557"/>
        <dbReference type="ChEBI" id="CHEBI:140395"/>
        <dbReference type="EC" id="2.7.7.6"/>
    </reaction>
</comment>
<comment type="cofactor">
    <cofactor evidence="4">
        <name>a divalent metal cation</name>
        <dbReference type="ChEBI" id="CHEBI:60240"/>
    </cofactor>
</comment>
<comment type="similarity">
    <text evidence="3">Belongs to the YRH RNA polymerase family.</text>
</comment>